<proteinExistence type="evidence at protein level"/>
<dbReference type="EMBL" id="AF469110">
    <property type="protein sequence ID" value="AAL82394.1"/>
    <property type="molecule type" value="mRNA"/>
</dbReference>
<dbReference type="EMBL" id="AF469111">
    <property type="protein sequence ID" value="AAL82395.1"/>
    <property type="molecule type" value="mRNA"/>
</dbReference>
<dbReference type="EMBL" id="AF442963">
    <property type="protein sequence ID" value="AAL35894.1"/>
    <property type="molecule type" value="Genomic_DNA"/>
</dbReference>
<dbReference type="EMBL" id="AF319422">
    <property type="protein sequence ID" value="AAG42814.3"/>
    <property type="molecule type" value="mRNA"/>
</dbReference>
<dbReference type="EMBL" id="AY078986">
    <property type="protein sequence ID" value="AAL85491.1"/>
    <property type="molecule type" value="mRNA"/>
</dbReference>
<dbReference type="EMBL" id="AY078985">
    <property type="protein sequence ID" value="AAL85490.1"/>
    <property type="molecule type" value="mRNA"/>
</dbReference>
<dbReference type="EMBL" id="AF132937">
    <property type="protein sequence ID" value="AAD27712.1"/>
    <property type="status" value="ALT_FRAME"/>
    <property type="molecule type" value="mRNA"/>
</dbReference>
<dbReference type="EMBL" id="AK074625">
    <property type="protein sequence ID" value="BAG51977.1"/>
    <property type="molecule type" value="mRNA"/>
</dbReference>
<dbReference type="EMBL" id="AK225828">
    <property type="status" value="NOT_ANNOTATED_CDS"/>
    <property type="molecule type" value="mRNA"/>
</dbReference>
<dbReference type="EMBL" id="AL603910">
    <property type="status" value="NOT_ANNOTATED_CDS"/>
    <property type="molecule type" value="Genomic_DNA"/>
</dbReference>
<dbReference type="EMBL" id="CH471051">
    <property type="protein sequence ID" value="EAW48762.1"/>
    <property type="molecule type" value="Genomic_DNA"/>
</dbReference>
<dbReference type="EMBL" id="BC005808">
    <property type="protein sequence ID" value="AAH05808.2"/>
    <property type="status" value="ALT_INIT"/>
    <property type="molecule type" value="mRNA"/>
</dbReference>
<dbReference type="EMBL" id="BC011051">
    <property type="protein sequence ID" value="AAH11051.2"/>
    <property type="molecule type" value="mRNA"/>
</dbReference>
<dbReference type="EMBL" id="AL833823">
    <property type="protein sequence ID" value="CAD38685.1"/>
    <property type="molecule type" value="mRNA"/>
</dbReference>
<dbReference type="CCDS" id="CCDS34485.1">
    <molecule id="Q9Y2Z2-4"/>
</dbReference>
<dbReference type="CCDS" id="CCDS47452.1">
    <molecule id="Q9Y2Z2-6"/>
</dbReference>
<dbReference type="CCDS" id="CCDS4979.1">
    <molecule id="Q9Y2Z2-1"/>
</dbReference>
<dbReference type="RefSeq" id="NP_001116698.1">
    <molecule id="Q9Y2Z2-6"/>
    <property type="nucleotide sequence ID" value="NM_001123226.2"/>
</dbReference>
<dbReference type="RefSeq" id="NP_036255.2">
    <molecule id="Q9Y2Z2-4"/>
    <property type="nucleotide sequence ID" value="NM_012123.4"/>
</dbReference>
<dbReference type="RefSeq" id="NP_598400.1">
    <molecule id="Q9Y2Z2-1"/>
    <property type="nucleotide sequence ID" value="NM_133645.3"/>
</dbReference>
<dbReference type="SMR" id="Q9Y2Z2"/>
<dbReference type="BioGRID" id="117349">
    <property type="interactions" value="94"/>
</dbReference>
<dbReference type="FunCoup" id="Q9Y2Z2">
    <property type="interactions" value="1484"/>
</dbReference>
<dbReference type="IntAct" id="Q9Y2Z2">
    <property type="interactions" value="73"/>
</dbReference>
<dbReference type="MINT" id="Q9Y2Z2"/>
<dbReference type="STRING" id="9606.ENSP00000402038"/>
<dbReference type="GlyGen" id="Q9Y2Z2">
    <property type="glycosylation" value="2 sites, 1 N-linked glycan (1 site), 1 O-linked glycan (1 site)"/>
</dbReference>
<dbReference type="iPTMnet" id="Q9Y2Z2"/>
<dbReference type="PhosphoSitePlus" id="Q9Y2Z2"/>
<dbReference type="SwissPalm" id="Q9Y2Z2"/>
<dbReference type="BioMuta" id="MTO1"/>
<dbReference type="DMDM" id="20981712"/>
<dbReference type="jPOST" id="Q9Y2Z2"/>
<dbReference type="MassIVE" id="Q9Y2Z2"/>
<dbReference type="PaxDb" id="9606-ENSP00000402038"/>
<dbReference type="PeptideAtlas" id="Q9Y2Z2"/>
<dbReference type="ProteomicsDB" id="85942">
    <molecule id="Q9Y2Z2-1"/>
</dbReference>
<dbReference type="ProteomicsDB" id="85943">
    <molecule id="Q9Y2Z2-2"/>
</dbReference>
<dbReference type="ProteomicsDB" id="85944">
    <molecule id="Q9Y2Z2-3"/>
</dbReference>
<dbReference type="ProteomicsDB" id="85945">
    <molecule id="Q9Y2Z2-4"/>
</dbReference>
<dbReference type="ProteomicsDB" id="85946">
    <molecule id="Q9Y2Z2-5"/>
</dbReference>
<dbReference type="ProteomicsDB" id="85947">
    <molecule id="Q9Y2Z2-6"/>
</dbReference>
<dbReference type="Pumba" id="Q9Y2Z2"/>
<dbReference type="Antibodypedia" id="31347">
    <property type="antibodies" value="91 antibodies from 23 providers"/>
</dbReference>
<dbReference type="DNASU" id="25821"/>
<dbReference type="Ensembl" id="ENST00000370300.8">
    <molecule id="Q9Y2Z2-1"/>
    <property type="protein sequence ID" value="ENSP00000359323.4"/>
    <property type="gene ID" value="ENSG00000135297.17"/>
</dbReference>
<dbReference type="Ensembl" id="ENST00000370305.5">
    <molecule id="Q9Y2Z2-5"/>
    <property type="protein sequence ID" value="ENSP00000359328.1"/>
    <property type="gene ID" value="ENSG00000135297.17"/>
</dbReference>
<dbReference type="Ensembl" id="ENST00000415954.6">
    <molecule id="Q9Y2Z2-6"/>
    <property type="protein sequence ID" value="ENSP00000402038.2"/>
    <property type="gene ID" value="ENSG00000135297.17"/>
</dbReference>
<dbReference type="Ensembl" id="ENST00000498286.6">
    <molecule id="Q9Y2Z2-4"/>
    <property type="protein sequence ID" value="ENSP00000419561.2"/>
    <property type="gene ID" value="ENSG00000135297.17"/>
</dbReference>
<dbReference type="GeneID" id="25821"/>
<dbReference type="KEGG" id="hsa:25821"/>
<dbReference type="MANE-Select" id="ENST00000498286.6">
    <molecule id="Q9Y2Z2-4"/>
    <property type="protein sequence ID" value="ENSP00000419561.2"/>
    <property type="RefSeq nucleotide sequence ID" value="NM_012123.4"/>
    <property type="RefSeq protein sequence ID" value="NP_036255.2"/>
</dbReference>
<dbReference type="UCSC" id="uc003pgy.5">
    <molecule id="Q9Y2Z2-1"/>
    <property type="organism name" value="human"/>
</dbReference>
<dbReference type="AGR" id="HGNC:19261"/>
<dbReference type="CTD" id="25821"/>
<dbReference type="DisGeNET" id="25821"/>
<dbReference type="GeneCards" id="MTO1"/>
<dbReference type="HGNC" id="HGNC:19261">
    <property type="gene designation" value="MTO1"/>
</dbReference>
<dbReference type="HPA" id="ENSG00000135297">
    <property type="expression patterns" value="Low tissue specificity"/>
</dbReference>
<dbReference type="MalaCards" id="MTO1"/>
<dbReference type="MIM" id="614667">
    <property type="type" value="gene"/>
</dbReference>
<dbReference type="MIM" id="614702">
    <property type="type" value="phenotype"/>
</dbReference>
<dbReference type="neXtProt" id="NX_Q9Y2Z2"/>
<dbReference type="OpenTargets" id="ENSG00000135297"/>
<dbReference type="Orphanet" id="314637">
    <property type="disease" value="Mitochondrial hypertrophic cardiomyopathy with lactic acidosis due to MTO1 deficiency"/>
</dbReference>
<dbReference type="PharmGKB" id="PA134974199"/>
<dbReference type="VEuPathDB" id="HostDB:ENSG00000135297"/>
<dbReference type="eggNOG" id="KOG2311">
    <property type="taxonomic scope" value="Eukaryota"/>
</dbReference>
<dbReference type="GeneTree" id="ENSGT00390000011297"/>
<dbReference type="HOGENOM" id="CLU_007831_2_2_1"/>
<dbReference type="InParanoid" id="Q9Y2Z2"/>
<dbReference type="OMA" id="CNPAMGG"/>
<dbReference type="OrthoDB" id="3329at2759"/>
<dbReference type="PAN-GO" id="Q9Y2Z2">
    <property type="GO annotations" value="4 GO annotations based on evolutionary models"/>
</dbReference>
<dbReference type="PhylomeDB" id="Q9Y2Z2"/>
<dbReference type="TreeFam" id="TF354240"/>
<dbReference type="BioCyc" id="MetaCyc:ENSG00000135297-MONOMER"/>
<dbReference type="PathwayCommons" id="Q9Y2Z2"/>
<dbReference type="Reactome" id="R-HSA-6787450">
    <property type="pathway name" value="tRNA modification in the mitochondrion"/>
</dbReference>
<dbReference type="SignaLink" id="Q9Y2Z2"/>
<dbReference type="BioGRID-ORCS" id="25821">
    <property type="hits" value="94 hits in 1161 CRISPR screens"/>
</dbReference>
<dbReference type="ChiTaRS" id="MTO1">
    <property type="organism name" value="human"/>
</dbReference>
<dbReference type="GeneWiki" id="MTO1"/>
<dbReference type="GenomeRNAi" id="25821"/>
<dbReference type="Pharos" id="Q9Y2Z2">
    <property type="development level" value="Tbio"/>
</dbReference>
<dbReference type="PRO" id="PR:Q9Y2Z2"/>
<dbReference type="Proteomes" id="UP000005640">
    <property type="component" value="Chromosome 6"/>
</dbReference>
<dbReference type="RNAct" id="Q9Y2Z2">
    <property type="molecule type" value="protein"/>
</dbReference>
<dbReference type="Bgee" id="ENSG00000135297">
    <property type="expression patterns" value="Expressed in germinal epithelium of ovary and 195 other cell types or tissues"/>
</dbReference>
<dbReference type="ExpressionAtlas" id="Q9Y2Z2">
    <property type="expression patterns" value="baseline and differential"/>
</dbReference>
<dbReference type="GO" id="GO:0005829">
    <property type="term" value="C:cytosol"/>
    <property type="evidence" value="ECO:0000318"/>
    <property type="project" value="GO_Central"/>
</dbReference>
<dbReference type="GO" id="GO:0005739">
    <property type="term" value="C:mitochondrion"/>
    <property type="evidence" value="ECO:0006056"/>
    <property type="project" value="FlyBase"/>
</dbReference>
<dbReference type="GO" id="GO:1990234">
    <property type="term" value="C:transferase complex"/>
    <property type="evidence" value="ECO:0000353"/>
    <property type="project" value="UniProtKB"/>
</dbReference>
<dbReference type="GO" id="GO:0050660">
    <property type="term" value="F:flavin adenine dinucleotide binding"/>
    <property type="evidence" value="ECO:0000318"/>
    <property type="project" value="GO_Central"/>
</dbReference>
<dbReference type="GO" id="GO:0003723">
    <property type="term" value="F:RNA binding"/>
    <property type="evidence" value="ECO:0007005"/>
    <property type="project" value="UniProtKB"/>
</dbReference>
<dbReference type="GO" id="GO:0160236">
    <property type="term" value="F:tRNA 5-taurinomethyluridine synthase activity"/>
    <property type="evidence" value="ECO:0000315"/>
    <property type="project" value="UniProtKB"/>
</dbReference>
<dbReference type="GO" id="GO:0070899">
    <property type="term" value="P:mitochondrial tRNA wobble uridine modification"/>
    <property type="evidence" value="ECO:0000315"/>
    <property type="project" value="UniProtKB"/>
</dbReference>
<dbReference type="GO" id="GO:0030488">
    <property type="term" value="P:tRNA methylation"/>
    <property type="evidence" value="ECO:0000318"/>
    <property type="project" value="GO_Central"/>
</dbReference>
<dbReference type="FunFam" id="2.40.30.260:FF:000001">
    <property type="entry name" value="protein MTO1 homolog, mitochondrial isoform X1"/>
    <property type="match status" value="1"/>
</dbReference>
<dbReference type="FunFam" id="3.50.50.60:FF:000082">
    <property type="entry name" value="protein MTO1 homolog, mitochondrial isoform X1"/>
    <property type="match status" value="1"/>
</dbReference>
<dbReference type="FunFam" id="1.10.150.570:FF:000001">
    <property type="entry name" value="tRNA uridine 5-carboxymethylaminomethyl modification enzyme MnmG"/>
    <property type="match status" value="1"/>
</dbReference>
<dbReference type="FunFam" id="3.50.50.60:FF:000094">
    <property type="entry name" value="tRNA uridine 5-carboxymethylaminomethyl modification enzyme MnmG"/>
    <property type="match status" value="1"/>
</dbReference>
<dbReference type="Gene3D" id="2.40.30.260">
    <property type="match status" value="1"/>
</dbReference>
<dbReference type="Gene3D" id="3.50.50.60">
    <property type="entry name" value="FAD/NAD(P)-binding domain"/>
    <property type="match status" value="2"/>
</dbReference>
<dbReference type="Gene3D" id="1.10.150.570">
    <property type="entry name" value="GidA associated domain, C-terminal subdomain"/>
    <property type="match status" value="1"/>
</dbReference>
<dbReference type="InterPro" id="IPR036188">
    <property type="entry name" value="FAD/NAD-bd_sf"/>
</dbReference>
<dbReference type="InterPro" id="IPR049312">
    <property type="entry name" value="GIDA_C_N"/>
</dbReference>
<dbReference type="InterPro" id="IPR002218">
    <property type="entry name" value="MnmG-rel"/>
</dbReference>
<dbReference type="InterPro" id="IPR020595">
    <property type="entry name" value="MnmG-rel_CS"/>
</dbReference>
<dbReference type="InterPro" id="IPR026904">
    <property type="entry name" value="MnmG_C"/>
</dbReference>
<dbReference type="InterPro" id="IPR047001">
    <property type="entry name" value="MnmG_C_subdom"/>
</dbReference>
<dbReference type="InterPro" id="IPR044920">
    <property type="entry name" value="MnmG_C_subdom_sf"/>
</dbReference>
<dbReference type="InterPro" id="IPR040131">
    <property type="entry name" value="MnmG_N"/>
</dbReference>
<dbReference type="PANTHER" id="PTHR11806">
    <property type="entry name" value="GLUCOSE INHIBITED DIVISION PROTEIN A"/>
    <property type="match status" value="1"/>
</dbReference>
<dbReference type="PANTHER" id="PTHR11806:SF0">
    <property type="entry name" value="PROTEIN MTO1 HOMOLOG, MITOCHONDRIAL"/>
    <property type="match status" value="1"/>
</dbReference>
<dbReference type="Pfam" id="PF01134">
    <property type="entry name" value="GIDA"/>
    <property type="match status" value="1"/>
</dbReference>
<dbReference type="Pfam" id="PF21680">
    <property type="entry name" value="GIDA_C_1st"/>
    <property type="match status" value="1"/>
</dbReference>
<dbReference type="Pfam" id="PF13932">
    <property type="entry name" value="SAM_GIDA_C"/>
    <property type="match status" value="1"/>
</dbReference>
<dbReference type="PRINTS" id="PR00368">
    <property type="entry name" value="FADPNR"/>
</dbReference>
<dbReference type="PRINTS" id="PR00411">
    <property type="entry name" value="PNDRDTASEI"/>
</dbReference>
<dbReference type="SMART" id="SM01228">
    <property type="entry name" value="GIDA_assoc_3"/>
    <property type="match status" value="1"/>
</dbReference>
<dbReference type="SUPFAM" id="SSF51905">
    <property type="entry name" value="FAD/NAD(P)-binding domain"/>
    <property type="match status" value="1"/>
</dbReference>
<dbReference type="PROSITE" id="PS01280">
    <property type="entry name" value="GIDA_1"/>
    <property type="match status" value="1"/>
</dbReference>
<dbReference type="PROSITE" id="PS01281">
    <property type="entry name" value="GIDA_2"/>
    <property type="match status" value="1"/>
</dbReference>
<feature type="transit peptide" description="Mitochondrion" evidence="3">
    <location>
        <begin position="1"/>
        <end position="25"/>
    </location>
</feature>
<feature type="chain" id="PRO_0000042688" description="5-taurinomethyluridine-[tRNA] synthase subunit MTO1, mitochondrial">
    <location>
        <begin position="26"/>
        <end position="717"/>
    </location>
</feature>
<feature type="binding site" evidence="1">
    <location>
        <begin position="43"/>
        <end position="48"/>
    </location>
    <ligand>
        <name>FAD</name>
        <dbReference type="ChEBI" id="CHEBI:57692"/>
    </ligand>
</feature>
<feature type="binding site" evidence="1">
    <location>
        <position position="155"/>
    </location>
    <ligand>
        <name>FAD</name>
        <dbReference type="ChEBI" id="CHEBI:57692"/>
    </ligand>
</feature>
<feature type="binding site" evidence="1">
    <location>
        <position position="218"/>
    </location>
    <ligand>
        <name>FAD</name>
        <dbReference type="ChEBI" id="CHEBI:57692"/>
    </ligand>
</feature>
<feature type="binding site" evidence="1">
    <location>
        <position position="432"/>
    </location>
    <ligand>
        <name>FAD</name>
        <dbReference type="ChEBI" id="CHEBI:57692"/>
    </ligand>
</feature>
<feature type="modified residue" description="N6-methyllysine" evidence="19">
    <location>
        <position position="533"/>
    </location>
</feature>
<feature type="splice variant" id="VSP_001748" description="In isoform 6." evidence="11">
    <location>
        <begin position="1"/>
        <end position="74"/>
    </location>
</feature>
<feature type="splice variant" id="VSP_001749" description="In isoform 1." evidence="9">
    <location>
        <begin position="179"/>
        <end position="275"/>
    </location>
</feature>
<feature type="splice variant" id="VSP_001750" description="In isoform 2." evidence="9">
    <location>
        <begin position="314"/>
        <end position="717"/>
    </location>
</feature>
<feature type="splice variant" id="VSP_040985" description="In isoform 7." evidence="15">
    <location>
        <begin position="376"/>
        <end position="400"/>
    </location>
</feature>
<feature type="splice variant" id="VSP_001751" description="In isoform 1 and isoform 5." evidence="8 9 10 11 12">
    <location>
        <begin position="377"/>
        <end position="401"/>
    </location>
</feature>
<feature type="splice variant" id="VSP_040986" description="In isoform 7." evidence="15">
    <original>A</original>
    <variation>AQTECCSVARLECSDMISQLQAILLPQPSLVAGTAGMHHNT</variation>
    <location>
        <position position="444"/>
    </location>
</feature>
<feature type="sequence variant" id="VAR_068693" description="In COXPD10; dbSNP:rs143747297." evidence="5">
    <original>A</original>
    <variation>T</variation>
    <location>
        <position position="453"/>
    </location>
</feature>
<feature type="sequence conflict" description="In Ref. 1; AAL82394/AAL82395 and 2; AAD27712." evidence="16" ref="1 2">
    <original>H</original>
    <variation>Q</variation>
    <location>
        <position position="300"/>
    </location>
</feature>
<feature type="sequence conflict" description="In Ref. 1; AAL35894." evidence="16" ref="1">
    <original>LA</original>
    <variation>CT</variation>
    <location>
        <begin position="586"/>
        <end position="587"/>
    </location>
</feature>
<gene>
    <name evidence="18" type="primary">MTO1</name>
    <name type="ORF">CGI-02</name>
</gene>
<reference key="1">
    <citation type="journal article" date="2002" name="J. Biol. Chem.">
        <title>Isolation and characterization of the putative nuclear modifier gene MTO1 involved in the pathogenesis of deafness-associated mitochondrial 12 S rRNA A1555G mutation.</title>
        <authorList>
            <person name="Li X.M."/>
            <person name="Li R.H."/>
            <person name="Lin X."/>
            <person name="Guan M.-X."/>
        </authorList>
    </citation>
    <scope>NUCLEOTIDE SEQUENCE [GENOMIC DNA / MRNA] (ISOFORMS 1; 2; 3 AND 5)</scope>
    <scope>TISSUE SPECIFICITY</scope>
</reference>
<reference key="2">
    <citation type="journal article" date="2000" name="Genome Res.">
        <title>Identification of novel human genes evolutionarily conserved in Caenorhabditis elegans by comparative proteomics.</title>
        <authorList>
            <person name="Lai C.-H."/>
            <person name="Chou C.-Y."/>
            <person name="Ch'ang L.-Y."/>
            <person name="Liu C.-S."/>
            <person name="Lin W.-C."/>
        </authorList>
    </citation>
    <scope>NUCLEOTIDE SEQUENCE [LARGE SCALE MRNA] (ISOFORM 5)</scope>
</reference>
<reference key="3">
    <citation type="journal article" date="2004" name="Nat. Genet.">
        <title>Complete sequencing and characterization of 21,243 full-length human cDNAs.</title>
        <authorList>
            <person name="Ota T."/>
            <person name="Suzuki Y."/>
            <person name="Nishikawa T."/>
            <person name="Otsuki T."/>
            <person name="Sugiyama T."/>
            <person name="Irie R."/>
            <person name="Wakamatsu A."/>
            <person name="Hayashi K."/>
            <person name="Sato H."/>
            <person name="Nagai K."/>
            <person name="Kimura K."/>
            <person name="Makita H."/>
            <person name="Sekine M."/>
            <person name="Obayashi M."/>
            <person name="Nishi T."/>
            <person name="Shibahara T."/>
            <person name="Tanaka T."/>
            <person name="Ishii S."/>
            <person name="Yamamoto J."/>
            <person name="Saito K."/>
            <person name="Kawai Y."/>
            <person name="Isono Y."/>
            <person name="Nakamura Y."/>
            <person name="Nagahari K."/>
            <person name="Murakami K."/>
            <person name="Yasuda T."/>
            <person name="Iwayanagi T."/>
            <person name="Wagatsuma M."/>
            <person name="Shiratori A."/>
            <person name="Sudo H."/>
            <person name="Hosoiri T."/>
            <person name="Kaku Y."/>
            <person name="Kodaira H."/>
            <person name="Kondo H."/>
            <person name="Sugawara M."/>
            <person name="Takahashi M."/>
            <person name="Kanda K."/>
            <person name="Yokoi T."/>
            <person name="Furuya T."/>
            <person name="Kikkawa E."/>
            <person name="Omura Y."/>
            <person name="Abe K."/>
            <person name="Kamihara K."/>
            <person name="Katsuta N."/>
            <person name="Sato K."/>
            <person name="Tanikawa M."/>
            <person name="Yamazaki M."/>
            <person name="Ninomiya K."/>
            <person name="Ishibashi T."/>
            <person name="Yamashita H."/>
            <person name="Murakawa K."/>
            <person name="Fujimori K."/>
            <person name="Tanai H."/>
            <person name="Kimata M."/>
            <person name="Watanabe M."/>
            <person name="Hiraoka S."/>
            <person name="Chiba Y."/>
            <person name="Ishida S."/>
            <person name="Ono Y."/>
            <person name="Takiguchi S."/>
            <person name="Watanabe S."/>
            <person name="Yosida M."/>
            <person name="Hotuta T."/>
            <person name="Kusano J."/>
            <person name="Kanehori K."/>
            <person name="Takahashi-Fujii A."/>
            <person name="Hara H."/>
            <person name="Tanase T.-O."/>
            <person name="Nomura Y."/>
            <person name="Togiya S."/>
            <person name="Komai F."/>
            <person name="Hara R."/>
            <person name="Takeuchi K."/>
            <person name="Arita M."/>
            <person name="Imose N."/>
            <person name="Musashino K."/>
            <person name="Yuuki H."/>
            <person name="Oshima A."/>
            <person name="Sasaki N."/>
            <person name="Aotsuka S."/>
            <person name="Yoshikawa Y."/>
            <person name="Matsunawa H."/>
            <person name="Ichihara T."/>
            <person name="Shiohata N."/>
            <person name="Sano S."/>
            <person name="Moriya S."/>
            <person name="Momiyama H."/>
            <person name="Satoh N."/>
            <person name="Takami S."/>
            <person name="Terashima Y."/>
            <person name="Suzuki O."/>
            <person name="Nakagawa S."/>
            <person name="Senoh A."/>
            <person name="Mizoguchi H."/>
            <person name="Goto Y."/>
            <person name="Shimizu F."/>
            <person name="Wakebe H."/>
            <person name="Hishigaki H."/>
            <person name="Watanabe T."/>
            <person name="Sugiyama A."/>
            <person name="Takemoto M."/>
            <person name="Kawakami B."/>
            <person name="Yamazaki M."/>
            <person name="Watanabe K."/>
            <person name="Kumagai A."/>
            <person name="Itakura S."/>
            <person name="Fukuzumi Y."/>
            <person name="Fujimori Y."/>
            <person name="Komiyama M."/>
            <person name="Tashiro H."/>
            <person name="Tanigami A."/>
            <person name="Fujiwara T."/>
            <person name="Ono T."/>
            <person name="Yamada K."/>
            <person name="Fujii Y."/>
            <person name="Ozaki K."/>
            <person name="Hirao M."/>
            <person name="Ohmori Y."/>
            <person name="Kawabata A."/>
            <person name="Hikiji T."/>
            <person name="Kobatake N."/>
            <person name="Inagaki H."/>
            <person name="Ikema Y."/>
            <person name="Okamoto S."/>
            <person name="Okitani R."/>
            <person name="Kawakami T."/>
            <person name="Noguchi S."/>
            <person name="Itoh T."/>
            <person name="Shigeta K."/>
            <person name="Senba T."/>
            <person name="Matsumura K."/>
            <person name="Nakajima Y."/>
            <person name="Mizuno T."/>
            <person name="Morinaga M."/>
            <person name="Sasaki M."/>
            <person name="Togashi T."/>
            <person name="Oyama M."/>
            <person name="Hata H."/>
            <person name="Watanabe M."/>
            <person name="Komatsu T."/>
            <person name="Mizushima-Sugano J."/>
            <person name="Satoh T."/>
            <person name="Shirai Y."/>
            <person name="Takahashi Y."/>
            <person name="Nakagawa K."/>
            <person name="Okumura K."/>
            <person name="Nagase T."/>
            <person name="Nomura N."/>
            <person name="Kikuchi H."/>
            <person name="Masuho Y."/>
            <person name="Yamashita R."/>
            <person name="Nakai K."/>
            <person name="Yada T."/>
            <person name="Nakamura Y."/>
            <person name="Ohara O."/>
            <person name="Isogai T."/>
            <person name="Sugano S."/>
        </authorList>
    </citation>
    <scope>NUCLEOTIDE SEQUENCE [LARGE SCALE MRNA] (ISOFORM 5)</scope>
    <source>
        <tissue>Embryo</tissue>
    </source>
</reference>
<reference key="4">
    <citation type="submission" date="2006-07" db="EMBL/GenBank/DDBJ databases">
        <authorList>
            <person name="Totoki Y."/>
            <person name="Toyoda A."/>
            <person name="Takeda T."/>
            <person name="Sakaki Y."/>
            <person name="Tanaka A."/>
            <person name="Yokoyama S."/>
        </authorList>
    </citation>
    <scope>NUCLEOTIDE SEQUENCE [LARGE SCALE MRNA] (ISOFORM 7)</scope>
    <source>
        <tissue>Spleen</tissue>
    </source>
</reference>
<reference key="5">
    <citation type="journal article" date="2003" name="Nature">
        <title>The DNA sequence and analysis of human chromosome 6.</title>
        <authorList>
            <person name="Mungall A.J."/>
            <person name="Palmer S.A."/>
            <person name="Sims S.K."/>
            <person name="Edwards C.A."/>
            <person name="Ashurst J.L."/>
            <person name="Wilming L."/>
            <person name="Jones M.C."/>
            <person name="Horton R."/>
            <person name="Hunt S.E."/>
            <person name="Scott C.E."/>
            <person name="Gilbert J.G.R."/>
            <person name="Clamp M.E."/>
            <person name="Bethel G."/>
            <person name="Milne S."/>
            <person name="Ainscough R."/>
            <person name="Almeida J.P."/>
            <person name="Ambrose K.D."/>
            <person name="Andrews T.D."/>
            <person name="Ashwell R.I.S."/>
            <person name="Babbage A.K."/>
            <person name="Bagguley C.L."/>
            <person name="Bailey J."/>
            <person name="Banerjee R."/>
            <person name="Barker D.J."/>
            <person name="Barlow K.F."/>
            <person name="Bates K."/>
            <person name="Beare D.M."/>
            <person name="Beasley H."/>
            <person name="Beasley O."/>
            <person name="Bird C.P."/>
            <person name="Blakey S.E."/>
            <person name="Bray-Allen S."/>
            <person name="Brook J."/>
            <person name="Brown A.J."/>
            <person name="Brown J.Y."/>
            <person name="Burford D.C."/>
            <person name="Burrill W."/>
            <person name="Burton J."/>
            <person name="Carder C."/>
            <person name="Carter N.P."/>
            <person name="Chapman J.C."/>
            <person name="Clark S.Y."/>
            <person name="Clark G."/>
            <person name="Clee C.M."/>
            <person name="Clegg S."/>
            <person name="Cobley V."/>
            <person name="Collier R.E."/>
            <person name="Collins J.E."/>
            <person name="Colman L.K."/>
            <person name="Corby N.R."/>
            <person name="Coville G.J."/>
            <person name="Culley K.M."/>
            <person name="Dhami P."/>
            <person name="Davies J."/>
            <person name="Dunn M."/>
            <person name="Earthrowl M.E."/>
            <person name="Ellington A.E."/>
            <person name="Evans K.A."/>
            <person name="Faulkner L."/>
            <person name="Francis M.D."/>
            <person name="Frankish A."/>
            <person name="Frankland J."/>
            <person name="French L."/>
            <person name="Garner P."/>
            <person name="Garnett J."/>
            <person name="Ghori M.J."/>
            <person name="Gilby L.M."/>
            <person name="Gillson C.J."/>
            <person name="Glithero R.J."/>
            <person name="Grafham D.V."/>
            <person name="Grant M."/>
            <person name="Gribble S."/>
            <person name="Griffiths C."/>
            <person name="Griffiths M.N.D."/>
            <person name="Hall R."/>
            <person name="Halls K.S."/>
            <person name="Hammond S."/>
            <person name="Harley J.L."/>
            <person name="Hart E.A."/>
            <person name="Heath P.D."/>
            <person name="Heathcott R."/>
            <person name="Holmes S.J."/>
            <person name="Howden P.J."/>
            <person name="Howe K.L."/>
            <person name="Howell G.R."/>
            <person name="Huckle E."/>
            <person name="Humphray S.J."/>
            <person name="Humphries M.D."/>
            <person name="Hunt A.R."/>
            <person name="Johnson C.M."/>
            <person name="Joy A.A."/>
            <person name="Kay M."/>
            <person name="Keenan S.J."/>
            <person name="Kimberley A.M."/>
            <person name="King A."/>
            <person name="Laird G.K."/>
            <person name="Langford C."/>
            <person name="Lawlor S."/>
            <person name="Leongamornlert D.A."/>
            <person name="Leversha M."/>
            <person name="Lloyd C.R."/>
            <person name="Lloyd D.M."/>
            <person name="Loveland J.E."/>
            <person name="Lovell J."/>
            <person name="Martin S."/>
            <person name="Mashreghi-Mohammadi M."/>
            <person name="Maslen G.L."/>
            <person name="Matthews L."/>
            <person name="McCann O.T."/>
            <person name="McLaren S.J."/>
            <person name="McLay K."/>
            <person name="McMurray A."/>
            <person name="Moore M.J.F."/>
            <person name="Mullikin J.C."/>
            <person name="Niblett D."/>
            <person name="Nickerson T."/>
            <person name="Novik K.L."/>
            <person name="Oliver K."/>
            <person name="Overton-Larty E.K."/>
            <person name="Parker A."/>
            <person name="Patel R."/>
            <person name="Pearce A.V."/>
            <person name="Peck A.I."/>
            <person name="Phillimore B.J.C.T."/>
            <person name="Phillips S."/>
            <person name="Plumb R.W."/>
            <person name="Porter K.M."/>
            <person name="Ramsey Y."/>
            <person name="Ranby S.A."/>
            <person name="Rice C.M."/>
            <person name="Ross M.T."/>
            <person name="Searle S.M."/>
            <person name="Sehra H.K."/>
            <person name="Sheridan E."/>
            <person name="Skuce C.D."/>
            <person name="Smith S."/>
            <person name="Smith M."/>
            <person name="Spraggon L."/>
            <person name="Squares S.L."/>
            <person name="Steward C.A."/>
            <person name="Sycamore N."/>
            <person name="Tamlyn-Hall G."/>
            <person name="Tester J."/>
            <person name="Theaker A.J."/>
            <person name="Thomas D.W."/>
            <person name="Thorpe A."/>
            <person name="Tracey A."/>
            <person name="Tromans A."/>
            <person name="Tubby B."/>
            <person name="Wall M."/>
            <person name="Wallis J.M."/>
            <person name="West A.P."/>
            <person name="White S.S."/>
            <person name="Whitehead S.L."/>
            <person name="Whittaker H."/>
            <person name="Wild A."/>
            <person name="Willey D.J."/>
            <person name="Wilmer T.E."/>
            <person name="Wood J.M."/>
            <person name="Wray P.W."/>
            <person name="Wyatt J.C."/>
            <person name="Young L."/>
            <person name="Younger R.M."/>
            <person name="Bentley D.R."/>
            <person name="Coulson A."/>
            <person name="Durbin R.M."/>
            <person name="Hubbard T."/>
            <person name="Sulston J.E."/>
            <person name="Dunham I."/>
            <person name="Rogers J."/>
            <person name="Beck S."/>
        </authorList>
    </citation>
    <scope>NUCLEOTIDE SEQUENCE [LARGE SCALE GENOMIC DNA]</scope>
</reference>
<reference key="6">
    <citation type="submission" date="2005-09" db="EMBL/GenBank/DDBJ databases">
        <authorList>
            <person name="Mural R.J."/>
            <person name="Istrail S."/>
            <person name="Sutton G.G."/>
            <person name="Florea L."/>
            <person name="Halpern A.L."/>
            <person name="Mobarry C.M."/>
            <person name="Lippert R."/>
            <person name="Walenz B."/>
            <person name="Shatkay H."/>
            <person name="Dew I."/>
            <person name="Miller J.R."/>
            <person name="Flanigan M.J."/>
            <person name="Edwards N.J."/>
            <person name="Bolanos R."/>
            <person name="Fasulo D."/>
            <person name="Halldorsson B.V."/>
            <person name="Hannenhalli S."/>
            <person name="Turner R."/>
            <person name="Yooseph S."/>
            <person name="Lu F."/>
            <person name="Nusskern D.R."/>
            <person name="Shue B.C."/>
            <person name="Zheng X.H."/>
            <person name="Zhong F."/>
            <person name="Delcher A.L."/>
            <person name="Huson D.H."/>
            <person name="Kravitz S.A."/>
            <person name="Mouchard L."/>
            <person name="Reinert K."/>
            <person name="Remington K.A."/>
            <person name="Clark A.G."/>
            <person name="Waterman M.S."/>
            <person name="Eichler E.E."/>
            <person name="Adams M.D."/>
            <person name="Hunkapiller M.W."/>
            <person name="Myers E.W."/>
            <person name="Venter J.C."/>
        </authorList>
    </citation>
    <scope>NUCLEOTIDE SEQUENCE [LARGE SCALE GENOMIC DNA]</scope>
</reference>
<reference key="7">
    <citation type="journal article" date="2004" name="Genome Res.">
        <title>The status, quality, and expansion of the NIH full-length cDNA project: the Mammalian Gene Collection (MGC).</title>
        <authorList>
            <consortium name="The MGC Project Team"/>
        </authorList>
    </citation>
    <scope>NUCLEOTIDE SEQUENCE [LARGE SCALE MRNA] (ISOFORMS 5 AND 6)</scope>
    <source>
        <tissue>Lymph</tissue>
        <tissue>Placenta</tissue>
    </source>
</reference>
<reference key="8">
    <citation type="journal article" date="2007" name="BMC Genomics">
        <title>The full-ORF clone resource of the German cDNA consortium.</title>
        <authorList>
            <person name="Bechtel S."/>
            <person name="Rosenfelder H."/>
            <person name="Duda A."/>
            <person name="Schmidt C.P."/>
            <person name="Ernst U."/>
            <person name="Wellenreuther R."/>
            <person name="Mehrle A."/>
            <person name="Schuster C."/>
            <person name="Bahr A."/>
            <person name="Bloecker H."/>
            <person name="Heubner D."/>
            <person name="Hoerlein A."/>
            <person name="Michel G."/>
            <person name="Wedler H."/>
            <person name="Koehrer K."/>
            <person name="Ottenwaelder B."/>
            <person name="Poustka A."/>
            <person name="Wiemann S."/>
            <person name="Schupp I."/>
        </authorList>
    </citation>
    <scope>NUCLEOTIDE SEQUENCE [LARGE SCALE MRNA] OF 12-717 (ISOFORM 5)</scope>
    <source>
        <tissue>Uterus</tissue>
    </source>
</reference>
<reference key="9">
    <citation type="journal article" date="2014" name="Mol. Cell. Proteomics">
        <title>Immunoaffinity enrichment and mass spectrometry analysis of protein methylation.</title>
        <authorList>
            <person name="Guo A."/>
            <person name="Gu H."/>
            <person name="Zhou J."/>
            <person name="Mulhern D."/>
            <person name="Wang Y."/>
            <person name="Lee K.A."/>
            <person name="Yang V."/>
            <person name="Aguiar M."/>
            <person name="Kornhauser J."/>
            <person name="Jia X."/>
            <person name="Ren J."/>
            <person name="Beausoleil S.A."/>
            <person name="Silva J.C."/>
            <person name="Vemulapalli V."/>
            <person name="Bedford M.T."/>
            <person name="Comb M.J."/>
        </authorList>
    </citation>
    <scope>METHYLATION [LARGE SCALE ANALYSIS] AT LYS-533</scope>
    <scope>IDENTIFICATION BY MASS SPECTROMETRY [LARGE SCALE ANALYSIS]</scope>
    <source>
        <tissue>Colon carcinoma</tissue>
    </source>
</reference>
<reference key="10">
    <citation type="journal article" date="2018" name="Nucleic Acids Res.">
        <title>Metabolic and chemical regulation of tRNA modification associated with taurine deficiency and human disease.</title>
        <authorList>
            <person name="Asano K."/>
            <person name="Suzuki T."/>
            <person name="Saito A."/>
            <person name="Wei F.Y."/>
            <person name="Ikeuchi Y."/>
            <person name="Numata T."/>
            <person name="Tanaka R."/>
            <person name="Yamane Y."/>
            <person name="Yamamoto T."/>
            <person name="Goto T."/>
            <person name="Kishita Y."/>
            <person name="Murayama K."/>
            <person name="Ohtake A."/>
            <person name="Okazaki Y."/>
            <person name="Tomizawa K."/>
            <person name="Sakaguchi Y."/>
            <person name="Suzuki T."/>
        </authorList>
    </citation>
    <scope>FUNCTION</scope>
    <scope>CATALYTIC ACTIVITY</scope>
    <scope>INTERACTION WITH GTPB3</scope>
</reference>
<reference key="11">
    <citation type="journal article" date="2021" name="Nucleic Acids Res.">
        <title>The human tRNA taurine modification enzyme GTPBP3 is an active GTPase linked to mitochondrial diseases.</title>
        <authorList>
            <person name="Peng G.X."/>
            <person name="Zhang Y."/>
            <person name="Wang Q.Q."/>
            <person name="Li Q.R."/>
            <person name="Xu H."/>
            <person name="Wang E.D."/>
            <person name="Zhou X.L."/>
        </authorList>
    </citation>
    <scope>FUNCTION</scope>
    <scope>INTERACTION WITH GTPBP3</scope>
</reference>
<reference key="12">
    <citation type="journal article" date="2012" name="Am. J. Hum. Genet.">
        <title>Mutations of the mitochondrial-tRNA modifier MTO1 cause hypertrophic cardiomyopathy and lactic acidosis.</title>
        <authorList>
            <person name="Ghezzi D."/>
            <person name="Baruffini E."/>
            <person name="Haack T.B."/>
            <person name="Invernizzi F."/>
            <person name="Melchionda L."/>
            <person name="Dallabona C."/>
            <person name="Strom T.M."/>
            <person name="Parini R."/>
            <person name="Burlina A.B."/>
            <person name="Meitinger T."/>
            <person name="Prokisch H."/>
            <person name="Ferrero I."/>
            <person name="Zeviani M."/>
        </authorList>
    </citation>
    <scope>VARIANT COXPD10 THR-453</scope>
</reference>
<accession>Q9Y2Z2</accession>
<accession>B3KQB5</accession>
<accession>Q5SWL2</accession>
<accession>Q5SWL3</accession>
<accession>Q5SWL4</accession>
<accession>Q8NDN7</accession>
<accession>Q8WZ57</accession>
<accession>Q96FE6</accession>
<accession>Q9BS06</accession>
<name>MTO1_HUMAN</name>
<comment type="function">
    <text evidence="6 7">Component of the GTPBP3-MTO1 complex that catalyzes the 5-taurinomethyluridine (taum(5)U) modification at the 34th wobble position (U34) of mitochondrial tRNAs (mt-tRNAs), which plays a role in mt-tRNA decoding and mitochondrial translation (PubMed:29390138, PubMed:33619562). Taum(5)U formation on mammalian mt-tRNA requires the presence of both GTPBP3-mediated GTPase activity and MTO1 catalytic activity (PubMed:29390138).</text>
</comment>
<comment type="catalytic activity">
    <reaction evidence="6">
        <text>5,10-methylenetetrahydrofolate + uridine(34) in tRNA + taurine + GTP + A + H2O = 5-taurinomethyluridine(34) in tRNA + 7,8-dihydrofolate + GDP + AH2 + phosphate + H(+)</text>
        <dbReference type="Rhea" id="RHEA:83279"/>
        <dbReference type="Rhea" id="RHEA-COMP:11727"/>
        <dbReference type="Rhea" id="RHEA-COMP:11732"/>
        <dbReference type="ChEBI" id="CHEBI:12071"/>
        <dbReference type="ChEBI" id="CHEBI:13193"/>
        <dbReference type="ChEBI" id="CHEBI:15377"/>
        <dbReference type="ChEBI" id="CHEBI:15378"/>
        <dbReference type="ChEBI" id="CHEBI:17499"/>
        <dbReference type="ChEBI" id="CHEBI:37565"/>
        <dbReference type="ChEBI" id="CHEBI:43474"/>
        <dbReference type="ChEBI" id="CHEBI:57451"/>
        <dbReference type="ChEBI" id="CHEBI:58189"/>
        <dbReference type="ChEBI" id="CHEBI:65315"/>
        <dbReference type="ChEBI" id="CHEBI:87172"/>
        <dbReference type="ChEBI" id="CHEBI:507393"/>
    </reaction>
    <physiologicalReaction direction="left-to-right" evidence="17">
        <dbReference type="Rhea" id="RHEA:83280"/>
    </physiologicalReaction>
</comment>
<comment type="cofactor">
    <cofactor evidence="1">
        <name>FAD</name>
        <dbReference type="ChEBI" id="CHEBI:57692"/>
    </cofactor>
</comment>
<comment type="subunit">
    <text evidence="6 7">Homodimer; forms a dimer in the presence of potassium (PubMed:33619562). Interacts with GTPBP3; forms the GTPBP3-MTO1 complex composed of homodimers of GTPBP3 and MTO1 (PubMed:29390138, PubMed:33619562).</text>
</comment>
<comment type="subcellular location">
    <subcellularLocation>
        <location evidence="2">Mitochondrion</location>
    </subcellularLocation>
</comment>
<comment type="alternative products">
    <event type="alternative splicing"/>
    <isoform>
        <id>Q9Y2Z2-1</id>
        <name>3</name>
        <name>4</name>
        <sequence type="displayed"/>
    </isoform>
    <isoform>
        <id>Q9Y2Z2-2</id>
        <name>1</name>
        <sequence type="described" ref="VSP_001749 VSP_001751"/>
    </isoform>
    <isoform>
        <id>Q9Y2Z2-3</id>
        <name>2</name>
        <sequence type="described" ref="VSP_001750"/>
    </isoform>
    <isoform>
        <id>Q9Y2Z2-4</id>
        <name>5</name>
        <sequence type="described" ref="VSP_001751"/>
    </isoform>
    <isoform>
        <id>Q9Y2Z2-5</id>
        <name>6</name>
        <sequence type="described" ref="VSP_001748"/>
    </isoform>
    <isoform>
        <id>Q9Y2Z2-6</id>
        <name>7</name>
        <sequence type="described" ref="VSP_040985 VSP_040986"/>
    </isoform>
</comment>
<comment type="tissue specificity">
    <text evidence="4">Ubiquitously expressed in various tissues, but with a markedly elevated expression in tissues of high metabolic rates including cochlea.</text>
</comment>
<comment type="disease" evidence="5">
    <disease id="DI-03492">
        <name>Combined oxidative phosphorylation deficiency 10</name>
        <acronym>COXPD10</acronym>
        <description>An autosomal recessive disorder resulting in variable defects of mitochondrial oxidative respiration. Affected individuals present in infancy with hypertrophic cardiomyopathy and lactic acidosis. The severity is variable, but can be fatal in the most severe cases.</description>
        <dbReference type="MIM" id="614702"/>
    </disease>
    <text>The disease is caused by variants affecting the gene represented in this entry.</text>
</comment>
<comment type="similarity">
    <text evidence="16">Belongs to the MnmG family.</text>
</comment>
<comment type="sequence caution" evidence="16">
    <conflict type="frameshift">
        <sequence resource="EMBL-CDS" id="AAD27712"/>
    </conflict>
</comment>
<comment type="sequence caution" evidence="16">
    <conflict type="erroneous initiation">
        <sequence resource="EMBL-CDS" id="AAH05808"/>
    </conflict>
    <text>Extended N-terminus.</text>
</comment>
<protein>
    <recommendedName>
        <fullName evidence="13">5-taurinomethyluridine-[tRNA] synthase subunit MTO1, mitochondrial</fullName>
    </recommendedName>
    <alternativeName>
        <fullName evidence="14">Mitochondrial tRNA translation optimization 1</fullName>
    </alternativeName>
    <alternativeName>
        <fullName evidence="9">Protein MTO1 homolog, mitochondrial</fullName>
    </alternativeName>
</protein>
<sequence>MFYFRGCGRWVAVSFTKQQFPLARLSSDSAAPRTPHFDVIVIGGGHAGTEAATAAARCGSRTLLLTHRVDTIGQMSCNPSFGGIGKGHLMREVDALDGLCSRICDQSGVHYKVLNRRKGPAVWGLRAQIDRKLYKQNMQKEILNTPLLTVQEGAVEDLILTEPEPEHTGKCRVSGVVLVDGSTVYAESVILTTGTFLRGMIVIGLETHPAGRLGDQPSIGLAQTLEKLGFVVGRLKTGTPPRIAKESINFSILNKHIPDNPSIPFSFTNETVWIKPEDQLPCYLTHTNPRVDEIVLKNLHLNSHVKETTRGPRYCPSIESKVLRFPNRLHQVWLEPEGMDSDLIYPQGLSMTLPAELQEKMITCIRGLEKAKVIQPDGVLLLLPRMECNGAISAHHNLPLPGYGVQYDYLDPRQITPSLETHLVQRLFFAGQINGTTGYEEAAAQGVIAGINASLRVSRKPPFVVSRTEGYIGVLIDDLTTLGTSEPYRMFTSRVEFRLSLRPDNADSRLTLRGYKDAGCVSQQRYERACWMKSSLEEGISVLKSIEFLSSKWKKLIPEASISTSRSLPVRALDVLKYEEVDMDSLAKAVPEPLKKYTKCRELAERLKIEATYESVLFHQLQEIKGVQQDEALQLPKDLDYLTIRDVSLSHEVREKLHFSRPQTIGAASRIPGVTPAAIINLLRFVKTTQRRQSAMNESSKTDQYLCDADRLQEREL</sequence>
<keyword id="KW-0025">Alternative splicing</keyword>
<keyword id="KW-0122">Cardiomyopathy</keyword>
<keyword id="KW-0225">Disease variant</keyword>
<keyword id="KW-0274">FAD</keyword>
<keyword id="KW-0285">Flavoprotein</keyword>
<keyword id="KW-0488">Methylation</keyword>
<keyword id="KW-0496">Mitochondrion</keyword>
<keyword id="KW-1274">Primary mitochondrial disease</keyword>
<keyword id="KW-1267">Proteomics identification</keyword>
<keyword id="KW-1185">Reference proteome</keyword>
<keyword id="KW-0809">Transit peptide</keyword>
<keyword id="KW-0819">tRNA processing</keyword>
<evidence type="ECO:0000250" key="1">
    <source>
        <dbReference type="UniProtKB" id="O66962"/>
    </source>
</evidence>
<evidence type="ECO:0000250" key="2">
    <source>
        <dbReference type="UniProtKB" id="Q923Z3"/>
    </source>
</evidence>
<evidence type="ECO:0000255" key="3"/>
<evidence type="ECO:0000269" key="4">
    <source>
    </source>
</evidence>
<evidence type="ECO:0000269" key="5">
    <source>
    </source>
</evidence>
<evidence type="ECO:0000269" key="6">
    <source>
    </source>
</evidence>
<evidence type="ECO:0000269" key="7">
    <source>
    </source>
</evidence>
<evidence type="ECO:0000303" key="8">
    <source>
    </source>
</evidence>
<evidence type="ECO:0000303" key="9">
    <source>
    </source>
</evidence>
<evidence type="ECO:0000303" key="10">
    <source>
    </source>
</evidence>
<evidence type="ECO:0000303" key="11">
    <source>
    </source>
</evidence>
<evidence type="ECO:0000303" key="12">
    <source>
    </source>
</evidence>
<evidence type="ECO:0000303" key="13">
    <source>
    </source>
</evidence>
<evidence type="ECO:0000303" key="14">
    <source>
    </source>
</evidence>
<evidence type="ECO:0000303" key="15">
    <source ref="4"/>
</evidence>
<evidence type="ECO:0000305" key="16"/>
<evidence type="ECO:0000305" key="17">
    <source>
    </source>
</evidence>
<evidence type="ECO:0000312" key="18">
    <source>
        <dbReference type="HGNC" id="HGNC:19261"/>
    </source>
</evidence>
<evidence type="ECO:0007744" key="19">
    <source>
    </source>
</evidence>
<organism>
    <name type="scientific">Homo sapiens</name>
    <name type="common">Human</name>
    <dbReference type="NCBI Taxonomy" id="9606"/>
    <lineage>
        <taxon>Eukaryota</taxon>
        <taxon>Metazoa</taxon>
        <taxon>Chordata</taxon>
        <taxon>Craniata</taxon>
        <taxon>Vertebrata</taxon>
        <taxon>Euteleostomi</taxon>
        <taxon>Mammalia</taxon>
        <taxon>Eutheria</taxon>
        <taxon>Euarchontoglires</taxon>
        <taxon>Primates</taxon>
        <taxon>Haplorrhini</taxon>
        <taxon>Catarrhini</taxon>
        <taxon>Hominidae</taxon>
        <taxon>Homo</taxon>
    </lineage>
</organism>